<evidence type="ECO:0000255" key="1">
    <source>
        <dbReference type="HAMAP-Rule" id="MF_01927"/>
    </source>
</evidence>
<sequence>MSEQVRHVLTLQCPEGIGIVHAVTGFLVRHQRTIVELKQYDDMSAGRLFLRVDFAGDSAPDLLDALRSEFSEVAAKFDMDWQLRERGQKTKVLIMVSKFEHCLQDLLFRMHSGDLPIEVVGVASNHPDHRSLVEWYGIGFHHIPISKDTKPRAEAALLELIDQTGAELVVLARYMQVLSDHLASELTGKTINIHHSFLPSFKGAKPYHQAWERGVKTVGATAHYVNSELDEGPIIAQQVVEVDHTYGPQDLVAAGRDSECKALSNAVRWHCEGRVFLYGNRTVVLR</sequence>
<organism>
    <name type="scientific">Corynebacterium sp. (strain P-1)</name>
    <dbReference type="NCBI Taxonomy" id="69006"/>
    <lineage>
        <taxon>Bacteria</taxon>
        <taxon>Bacillati</taxon>
        <taxon>Actinomycetota</taxon>
        <taxon>Actinomycetes</taxon>
        <taxon>Mycobacteriales</taxon>
        <taxon>Corynebacteriaceae</taxon>
        <taxon>Corynebacterium</taxon>
    </lineage>
</organism>
<feature type="chain" id="PRO_0000074960" description="Formyltetrahydrofolate deformylase">
    <location>
        <begin position="1"/>
        <end position="286"/>
    </location>
</feature>
<feature type="domain" description="ACT" evidence="1">
    <location>
        <begin position="8"/>
        <end position="88"/>
    </location>
</feature>
<feature type="active site" evidence="1">
    <location>
        <position position="230"/>
    </location>
</feature>
<keyword id="KW-0378">Hydrolase</keyword>
<keyword id="KW-0554">One-carbon metabolism</keyword>
<keyword id="KW-0658">Purine biosynthesis</keyword>
<dbReference type="EC" id="3.5.1.10" evidence="1"/>
<dbReference type="EMBL" id="U23955">
    <property type="protein sequence ID" value="AAC43463.1"/>
    <property type="molecule type" value="Genomic_DNA"/>
</dbReference>
<dbReference type="PIR" id="I40891">
    <property type="entry name" value="I40891"/>
</dbReference>
<dbReference type="SMR" id="Q46339"/>
<dbReference type="UniPathway" id="UPA00074">
    <property type="reaction ID" value="UER00170"/>
</dbReference>
<dbReference type="GO" id="GO:0008864">
    <property type="term" value="F:formyltetrahydrofolate deformylase activity"/>
    <property type="evidence" value="ECO:0007669"/>
    <property type="project" value="UniProtKB-UniRule"/>
</dbReference>
<dbReference type="GO" id="GO:0006189">
    <property type="term" value="P:'de novo' IMP biosynthetic process"/>
    <property type="evidence" value="ECO:0007669"/>
    <property type="project" value="UniProtKB-UniRule"/>
</dbReference>
<dbReference type="GO" id="GO:0006730">
    <property type="term" value="P:one-carbon metabolic process"/>
    <property type="evidence" value="ECO:0007669"/>
    <property type="project" value="UniProtKB-KW"/>
</dbReference>
<dbReference type="CDD" id="cd04875">
    <property type="entry name" value="ACT_F4HF-DF"/>
    <property type="match status" value="1"/>
</dbReference>
<dbReference type="CDD" id="cd08648">
    <property type="entry name" value="FMT_core_Formyl-FH4-Hydrolase_C"/>
    <property type="match status" value="1"/>
</dbReference>
<dbReference type="Gene3D" id="3.30.70.260">
    <property type="match status" value="1"/>
</dbReference>
<dbReference type="Gene3D" id="3.40.50.170">
    <property type="entry name" value="Formyl transferase, N-terminal domain"/>
    <property type="match status" value="1"/>
</dbReference>
<dbReference type="HAMAP" id="MF_01927">
    <property type="entry name" value="PurU"/>
    <property type="match status" value="1"/>
</dbReference>
<dbReference type="InterPro" id="IPR045865">
    <property type="entry name" value="ACT-like_dom_sf"/>
</dbReference>
<dbReference type="InterPro" id="IPR002912">
    <property type="entry name" value="ACT_dom"/>
</dbReference>
<dbReference type="InterPro" id="IPR041729">
    <property type="entry name" value="Formyl-FH4-Hydrolase_C"/>
</dbReference>
<dbReference type="InterPro" id="IPR002376">
    <property type="entry name" value="Formyl_transf_N"/>
</dbReference>
<dbReference type="InterPro" id="IPR036477">
    <property type="entry name" value="Formyl_transf_N_sf"/>
</dbReference>
<dbReference type="InterPro" id="IPR004810">
    <property type="entry name" value="PurU"/>
</dbReference>
<dbReference type="InterPro" id="IPR044074">
    <property type="entry name" value="PurU_ACT"/>
</dbReference>
<dbReference type="NCBIfam" id="NF004684">
    <property type="entry name" value="PRK06027.1"/>
    <property type="match status" value="1"/>
</dbReference>
<dbReference type="NCBIfam" id="TIGR00655">
    <property type="entry name" value="PurU"/>
    <property type="match status" value="1"/>
</dbReference>
<dbReference type="PANTHER" id="PTHR42706">
    <property type="entry name" value="FORMYLTETRAHYDROFOLATE DEFORMYLASE"/>
    <property type="match status" value="1"/>
</dbReference>
<dbReference type="PANTHER" id="PTHR42706:SF1">
    <property type="entry name" value="FORMYLTETRAHYDROFOLATE DEFORMYLASE 2, MITOCHONDRIAL"/>
    <property type="match status" value="1"/>
</dbReference>
<dbReference type="Pfam" id="PF00551">
    <property type="entry name" value="Formyl_trans_N"/>
    <property type="match status" value="1"/>
</dbReference>
<dbReference type="PIRSF" id="PIRSF036480">
    <property type="entry name" value="FormyFH4_hydr"/>
    <property type="match status" value="1"/>
</dbReference>
<dbReference type="PRINTS" id="PR01575">
    <property type="entry name" value="FFH4HYDRLASE"/>
</dbReference>
<dbReference type="SUPFAM" id="SSF55021">
    <property type="entry name" value="ACT-like"/>
    <property type="match status" value="1"/>
</dbReference>
<dbReference type="SUPFAM" id="SSF53328">
    <property type="entry name" value="Formyltransferase"/>
    <property type="match status" value="1"/>
</dbReference>
<dbReference type="PROSITE" id="PS51671">
    <property type="entry name" value="ACT"/>
    <property type="match status" value="1"/>
</dbReference>
<comment type="function">
    <text evidence="1">Catalyzes the hydrolysis of 10-formyltetrahydrofolate (formyl-FH4) to formate and tetrahydrofolate (FH4).</text>
</comment>
<comment type="catalytic activity">
    <reaction evidence="1">
        <text>(6R)-10-formyltetrahydrofolate + H2O = (6S)-5,6,7,8-tetrahydrofolate + formate + H(+)</text>
        <dbReference type="Rhea" id="RHEA:19833"/>
        <dbReference type="ChEBI" id="CHEBI:15377"/>
        <dbReference type="ChEBI" id="CHEBI:15378"/>
        <dbReference type="ChEBI" id="CHEBI:15740"/>
        <dbReference type="ChEBI" id="CHEBI:57453"/>
        <dbReference type="ChEBI" id="CHEBI:195366"/>
        <dbReference type="EC" id="3.5.1.10"/>
    </reaction>
</comment>
<comment type="pathway">
    <text evidence="1">Purine metabolism; IMP biosynthesis via de novo pathway; formate from 10-formyl-5,6,7,8-tetrahydrofolate: step 1/1.</text>
</comment>
<comment type="similarity">
    <text evidence="1">Belongs to the PurU family.</text>
</comment>
<proteinExistence type="inferred from homology"/>
<accession>Q46339</accession>
<gene>
    <name evidence="1" type="primary">purU</name>
</gene>
<reference key="1">
    <citation type="journal article" date="1995" name="J. Biol. Chem.">
        <title>Sequence analysis of sarcosine oxidase and nearby genes reveals homologies with key enzymes of folate one-carbon metabolism.</title>
        <authorList>
            <person name="Chlumsky L.J."/>
            <person name="Zhang L."/>
            <person name="Jorns M.S."/>
        </authorList>
    </citation>
    <scope>NUCLEOTIDE SEQUENCE [GENOMIC DNA]</scope>
</reference>
<name>PURU_CORS1</name>
<protein>
    <recommendedName>
        <fullName evidence="1">Formyltetrahydrofolate deformylase</fullName>
        <ecNumber evidence="1">3.5.1.10</ecNumber>
    </recommendedName>
    <alternativeName>
        <fullName evidence="1">Formyl-FH(4) hydrolase</fullName>
    </alternativeName>
</protein>